<comment type="function">
    <text evidence="1">Catalyzes the reversible reaction in which hydroxymethyl group from 5,10-methylenetetrahydrofolate is transferred onto alpha-ketoisovalerate to form ketopantoate.</text>
</comment>
<comment type="catalytic activity">
    <reaction evidence="1">
        <text>3-methyl-2-oxobutanoate + (6R)-5,10-methylene-5,6,7,8-tetrahydrofolate + H2O = 2-dehydropantoate + (6S)-5,6,7,8-tetrahydrofolate</text>
        <dbReference type="Rhea" id="RHEA:11824"/>
        <dbReference type="ChEBI" id="CHEBI:11561"/>
        <dbReference type="ChEBI" id="CHEBI:11851"/>
        <dbReference type="ChEBI" id="CHEBI:15377"/>
        <dbReference type="ChEBI" id="CHEBI:15636"/>
        <dbReference type="ChEBI" id="CHEBI:57453"/>
        <dbReference type="EC" id="2.1.2.11"/>
    </reaction>
</comment>
<comment type="cofactor">
    <cofactor evidence="1">
        <name>Mg(2+)</name>
        <dbReference type="ChEBI" id="CHEBI:18420"/>
    </cofactor>
    <text evidence="1">Binds 1 Mg(2+) ion per subunit.</text>
</comment>
<comment type="pathway">
    <text evidence="1">Cofactor biosynthesis; (R)-pantothenate biosynthesis; (R)-pantoate from 3-methyl-2-oxobutanoate: step 1/2.</text>
</comment>
<comment type="subunit">
    <text evidence="1">Homodecamer; pentamer of dimers.</text>
</comment>
<comment type="subcellular location">
    <subcellularLocation>
        <location evidence="1">Cytoplasm</location>
    </subcellularLocation>
</comment>
<comment type="similarity">
    <text evidence="1">Belongs to the PanB family.</text>
</comment>
<dbReference type="EC" id="2.1.2.11" evidence="1"/>
<dbReference type="EMBL" id="CP001087">
    <property type="protein sequence ID" value="ACN13375.1"/>
    <property type="molecule type" value="Genomic_DNA"/>
</dbReference>
<dbReference type="RefSeq" id="WP_012662624.1">
    <property type="nucleotide sequence ID" value="NC_012108.1"/>
</dbReference>
<dbReference type="SMR" id="C0QFH9"/>
<dbReference type="STRING" id="177437.HRM2_02530"/>
<dbReference type="KEGG" id="dat:HRM2_02530"/>
<dbReference type="eggNOG" id="COG0413">
    <property type="taxonomic scope" value="Bacteria"/>
</dbReference>
<dbReference type="HOGENOM" id="CLU_036645_1_0_7"/>
<dbReference type="OrthoDB" id="9781789at2"/>
<dbReference type="UniPathway" id="UPA00028">
    <property type="reaction ID" value="UER00003"/>
</dbReference>
<dbReference type="Proteomes" id="UP000000442">
    <property type="component" value="Chromosome"/>
</dbReference>
<dbReference type="GO" id="GO:0005737">
    <property type="term" value="C:cytoplasm"/>
    <property type="evidence" value="ECO:0007669"/>
    <property type="project" value="UniProtKB-SubCell"/>
</dbReference>
<dbReference type="GO" id="GO:0003864">
    <property type="term" value="F:3-methyl-2-oxobutanoate hydroxymethyltransferase activity"/>
    <property type="evidence" value="ECO:0007669"/>
    <property type="project" value="UniProtKB-UniRule"/>
</dbReference>
<dbReference type="GO" id="GO:0000287">
    <property type="term" value="F:magnesium ion binding"/>
    <property type="evidence" value="ECO:0007669"/>
    <property type="project" value="TreeGrafter"/>
</dbReference>
<dbReference type="GO" id="GO:0015940">
    <property type="term" value="P:pantothenate biosynthetic process"/>
    <property type="evidence" value="ECO:0007669"/>
    <property type="project" value="UniProtKB-UniRule"/>
</dbReference>
<dbReference type="CDD" id="cd06557">
    <property type="entry name" value="KPHMT-like"/>
    <property type="match status" value="1"/>
</dbReference>
<dbReference type="FunFam" id="3.20.20.60:FF:000003">
    <property type="entry name" value="3-methyl-2-oxobutanoate hydroxymethyltransferase"/>
    <property type="match status" value="1"/>
</dbReference>
<dbReference type="Gene3D" id="3.20.20.60">
    <property type="entry name" value="Phosphoenolpyruvate-binding domains"/>
    <property type="match status" value="1"/>
</dbReference>
<dbReference type="HAMAP" id="MF_00156">
    <property type="entry name" value="PanB"/>
    <property type="match status" value="1"/>
</dbReference>
<dbReference type="InterPro" id="IPR003700">
    <property type="entry name" value="Pantoate_hydroxy_MeTrfase"/>
</dbReference>
<dbReference type="InterPro" id="IPR015813">
    <property type="entry name" value="Pyrv/PenolPyrv_kinase-like_dom"/>
</dbReference>
<dbReference type="InterPro" id="IPR040442">
    <property type="entry name" value="Pyrv_kinase-like_dom_sf"/>
</dbReference>
<dbReference type="NCBIfam" id="TIGR00222">
    <property type="entry name" value="panB"/>
    <property type="match status" value="1"/>
</dbReference>
<dbReference type="NCBIfam" id="NF001452">
    <property type="entry name" value="PRK00311.1"/>
    <property type="match status" value="1"/>
</dbReference>
<dbReference type="PANTHER" id="PTHR20881">
    <property type="entry name" value="3-METHYL-2-OXOBUTANOATE HYDROXYMETHYLTRANSFERASE"/>
    <property type="match status" value="1"/>
</dbReference>
<dbReference type="PANTHER" id="PTHR20881:SF0">
    <property type="entry name" value="3-METHYL-2-OXOBUTANOATE HYDROXYMETHYLTRANSFERASE"/>
    <property type="match status" value="1"/>
</dbReference>
<dbReference type="Pfam" id="PF02548">
    <property type="entry name" value="Pantoate_transf"/>
    <property type="match status" value="1"/>
</dbReference>
<dbReference type="PIRSF" id="PIRSF000388">
    <property type="entry name" value="Pantoate_hydroxy_MeTrfase"/>
    <property type="match status" value="1"/>
</dbReference>
<dbReference type="SUPFAM" id="SSF51621">
    <property type="entry name" value="Phosphoenolpyruvate/pyruvate domain"/>
    <property type="match status" value="1"/>
</dbReference>
<evidence type="ECO:0000255" key="1">
    <source>
        <dbReference type="HAMAP-Rule" id="MF_00156"/>
    </source>
</evidence>
<feature type="chain" id="PRO_1000203469" description="3-methyl-2-oxobutanoate hydroxymethyltransferase">
    <location>
        <begin position="1"/>
        <end position="263"/>
    </location>
</feature>
<feature type="active site" description="Proton acceptor" evidence="1">
    <location>
        <position position="180"/>
    </location>
</feature>
<feature type="binding site" evidence="1">
    <location>
        <begin position="46"/>
        <end position="47"/>
    </location>
    <ligand>
        <name>3-methyl-2-oxobutanoate</name>
        <dbReference type="ChEBI" id="CHEBI:11851"/>
    </ligand>
</feature>
<feature type="binding site" evidence="1">
    <location>
        <position position="46"/>
    </location>
    <ligand>
        <name>Mg(2+)</name>
        <dbReference type="ChEBI" id="CHEBI:18420"/>
    </ligand>
</feature>
<feature type="binding site" evidence="1">
    <location>
        <position position="85"/>
    </location>
    <ligand>
        <name>3-methyl-2-oxobutanoate</name>
        <dbReference type="ChEBI" id="CHEBI:11851"/>
    </ligand>
</feature>
<feature type="binding site" evidence="1">
    <location>
        <position position="85"/>
    </location>
    <ligand>
        <name>Mg(2+)</name>
        <dbReference type="ChEBI" id="CHEBI:18420"/>
    </ligand>
</feature>
<feature type="binding site" evidence="1">
    <location>
        <position position="115"/>
    </location>
    <ligand>
        <name>3-methyl-2-oxobutanoate</name>
        <dbReference type="ChEBI" id="CHEBI:11851"/>
    </ligand>
</feature>
<feature type="binding site" evidence="1">
    <location>
        <position position="117"/>
    </location>
    <ligand>
        <name>Mg(2+)</name>
        <dbReference type="ChEBI" id="CHEBI:18420"/>
    </ligand>
</feature>
<sequence>MQPRVTTTTLFKMKQEGKRITALTAYDHPFATLVDAAGIDIILVGDSLGMVVQGKQTTLPVTMDEILYHTAMVTRACNRAMVVGDMPFMSYQSSINQAVDNAGRFLKEADASAVKLEGGADVCPVIQAIAKAGIPVQAHIGLTPQSVHQMGGFRVQRDEERLVSDALKVQDAGAFSVVLEGIPSDIAGIITKKLDIPTIGIGAGPGCDGQILVLHDMLGLHDRHLPKFVRQFADLRTQAARGLEQYRDAVRNGSFPAEEHGYK</sequence>
<proteinExistence type="inferred from homology"/>
<gene>
    <name evidence="1" type="primary">panB</name>
    <name type="ordered locus">HRM2_02530</name>
</gene>
<keyword id="KW-0963">Cytoplasm</keyword>
<keyword id="KW-0460">Magnesium</keyword>
<keyword id="KW-0479">Metal-binding</keyword>
<keyword id="KW-0566">Pantothenate biosynthesis</keyword>
<keyword id="KW-1185">Reference proteome</keyword>
<keyword id="KW-0808">Transferase</keyword>
<name>PANB_DESAH</name>
<reference key="1">
    <citation type="journal article" date="2009" name="Environ. Microbiol.">
        <title>Genome sequence of Desulfobacterium autotrophicum HRM2, a marine sulfate reducer oxidizing organic carbon completely to carbon dioxide.</title>
        <authorList>
            <person name="Strittmatter A.W."/>
            <person name="Liesegang H."/>
            <person name="Rabus R."/>
            <person name="Decker I."/>
            <person name="Amann J."/>
            <person name="Andres S."/>
            <person name="Henne A."/>
            <person name="Fricke W.F."/>
            <person name="Martinez-Arias R."/>
            <person name="Bartels D."/>
            <person name="Goesmann A."/>
            <person name="Krause L."/>
            <person name="Puehler A."/>
            <person name="Klenk H.P."/>
            <person name="Richter M."/>
            <person name="Schuler M."/>
            <person name="Gloeckner F.O."/>
            <person name="Meyerdierks A."/>
            <person name="Gottschalk G."/>
            <person name="Amann R."/>
        </authorList>
    </citation>
    <scope>NUCLEOTIDE SEQUENCE [LARGE SCALE GENOMIC DNA]</scope>
    <source>
        <strain>ATCC 43914 / DSM 3382 / VKM B-1955 / HRM2</strain>
    </source>
</reference>
<organism>
    <name type="scientific">Desulforapulum autotrophicum (strain ATCC 43914 / DSM 3382 / VKM B-1955 / HRM2)</name>
    <name type="common">Desulfobacterium autotrophicum</name>
    <dbReference type="NCBI Taxonomy" id="177437"/>
    <lineage>
        <taxon>Bacteria</taxon>
        <taxon>Pseudomonadati</taxon>
        <taxon>Thermodesulfobacteriota</taxon>
        <taxon>Desulfobacteria</taxon>
        <taxon>Desulfobacterales</taxon>
        <taxon>Desulfobacteraceae</taxon>
        <taxon>Desulforapulum</taxon>
    </lineage>
</organism>
<accession>C0QFH9</accession>
<protein>
    <recommendedName>
        <fullName evidence="1">3-methyl-2-oxobutanoate hydroxymethyltransferase</fullName>
        <ecNumber evidence="1">2.1.2.11</ecNumber>
    </recommendedName>
    <alternativeName>
        <fullName evidence="1">Ketopantoate hydroxymethyltransferase</fullName>
        <shortName evidence="1">KPHMT</shortName>
    </alternativeName>
</protein>